<feature type="signal peptide" description="Tat-type signal" evidence="1">
    <location>
        <begin position="1"/>
        <end position="44"/>
    </location>
</feature>
<feature type="chain" id="PRO_1000138721" description="Protein-methionine-sulfoxide reductase catalytic subunit MsrP" evidence="1">
    <location>
        <begin position="45"/>
        <end position="334"/>
    </location>
</feature>
<feature type="binding site" evidence="1">
    <location>
        <position position="88"/>
    </location>
    <ligand>
        <name>Mo-molybdopterin</name>
        <dbReference type="ChEBI" id="CHEBI:71302"/>
    </ligand>
</feature>
<feature type="binding site" evidence="1">
    <location>
        <begin position="91"/>
        <end position="92"/>
    </location>
    <ligand>
        <name>Mo-molybdopterin</name>
        <dbReference type="ChEBI" id="CHEBI:71302"/>
    </ligand>
</feature>
<feature type="binding site" evidence="1">
    <location>
        <position position="146"/>
    </location>
    <ligand>
        <name>Mo-molybdopterin</name>
        <dbReference type="ChEBI" id="CHEBI:71302"/>
    </ligand>
    <ligandPart>
        <name>Mo</name>
        <dbReference type="ChEBI" id="CHEBI:28685"/>
    </ligandPart>
</feature>
<feature type="binding site" evidence="1">
    <location>
        <position position="181"/>
    </location>
    <ligand>
        <name>Mo-molybdopterin</name>
        <dbReference type="ChEBI" id="CHEBI:71302"/>
    </ligand>
</feature>
<feature type="binding site" evidence="1">
    <location>
        <position position="233"/>
    </location>
    <ligand>
        <name>Mo-molybdopterin</name>
        <dbReference type="ChEBI" id="CHEBI:71302"/>
    </ligand>
</feature>
<feature type="binding site" evidence="1">
    <location>
        <position position="238"/>
    </location>
    <ligand>
        <name>Mo-molybdopterin</name>
        <dbReference type="ChEBI" id="CHEBI:71302"/>
    </ligand>
</feature>
<feature type="binding site" evidence="1">
    <location>
        <begin position="249"/>
        <end position="251"/>
    </location>
    <ligand>
        <name>Mo-molybdopterin</name>
        <dbReference type="ChEBI" id="CHEBI:71302"/>
    </ligand>
</feature>
<gene>
    <name evidence="1" type="primary">msrP</name>
    <name type="ordered locus">SeD_A3737</name>
</gene>
<comment type="function">
    <text evidence="1">Part of the MsrPQ system that repairs oxidized periplasmic proteins containing methionine sulfoxide residues (Met-O), using respiratory chain electrons. Thus protects these proteins from oxidative-stress damage caused by reactive species of oxygen and chlorine generated by the host defense mechanisms. MsrPQ is essential for the maintenance of envelope integrity under bleach stress, rescuing a wide series of structurally unrelated periplasmic proteins from methionine oxidation, including the primary periplasmic chaperone SurA and the lipoprotein Pal. The catalytic subunit MsrP is non-stereospecific, being able to reduce both (R-) and (S-) diastereoisomers of methionine sulfoxide.</text>
</comment>
<comment type="catalytic activity">
    <reaction evidence="1">
        <text>L-methionyl-[protein] + a quinone + H2O = L-methionyl-(S)-S-oxide-[protein] + a quinol</text>
        <dbReference type="Rhea" id="RHEA:51292"/>
        <dbReference type="Rhea" id="RHEA-COMP:12313"/>
        <dbReference type="Rhea" id="RHEA-COMP:12315"/>
        <dbReference type="ChEBI" id="CHEBI:15377"/>
        <dbReference type="ChEBI" id="CHEBI:16044"/>
        <dbReference type="ChEBI" id="CHEBI:24646"/>
        <dbReference type="ChEBI" id="CHEBI:44120"/>
        <dbReference type="ChEBI" id="CHEBI:132124"/>
    </reaction>
</comment>
<comment type="catalytic activity">
    <reaction evidence="1">
        <text>L-methionyl-[protein] + a quinone + H2O = L-methionyl-(R)-S-oxide-[protein] + a quinol</text>
        <dbReference type="Rhea" id="RHEA:51296"/>
        <dbReference type="Rhea" id="RHEA-COMP:12313"/>
        <dbReference type="Rhea" id="RHEA-COMP:12314"/>
        <dbReference type="ChEBI" id="CHEBI:15377"/>
        <dbReference type="ChEBI" id="CHEBI:16044"/>
        <dbReference type="ChEBI" id="CHEBI:24646"/>
        <dbReference type="ChEBI" id="CHEBI:45764"/>
        <dbReference type="ChEBI" id="CHEBI:132124"/>
    </reaction>
</comment>
<comment type="cofactor">
    <cofactor evidence="1">
        <name>Mo-molybdopterin</name>
        <dbReference type="ChEBI" id="CHEBI:71302"/>
    </cofactor>
    <text evidence="1">Binds 1 Mo-molybdopterin (Mo-MPT) cofactor per subunit.</text>
</comment>
<comment type="subunit">
    <text evidence="1">Heterodimer of a catalytic subunit (MsrP) and a heme-binding subunit (MsrQ).</text>
</comment>
<comment type="subcellular location">
    <subcellularLocation>
        <location evidence="1">Periplasm</location>
    </subcellularLocation>
    <text evidence="1">Is attached to the inner membrane when interacting with the MsrQ subunit.</text>
</comment>
<comment type="PTM">
    <text evidence="1">Predicted to be exported by the Tat system. The position of the signal peptide cleavage has not been experimentally proven.</text>
</comment>
<comment type="similarity">
    <text evidence="1">Belongs to the MsrP family.</text>
</comment>
<protein>
    <recommendedName>
        <fullName evidence="1">Protein-methionine-sulfoxide reductase catalytic subunit MsrP</fullName>
        <ecNumber evidence="1">1.8.5.-</ecNumber>
    </recommendedName>
</protein>
<proteinExistence type="inferred from homology"/>
<organism>
    <name type="scientific">Salmonella dublin (strain CT_02021853)</name>
    <dbReference type="NCBI Taxonomy" id="439851"/>
    <lineage>
        <taxon>Bacteria</taxon>
        <taxon>Pseudomonadati</taxon>
        <taxon>Pseudomonadota</taxon>
        <taxon>Gammaproteobacteria</taxon>
        <taxon>Enterobacterales</taxon>
        <taxon>Enterobacteriaceae</taxon>
        <taxon>Salmonella</taxon>
    </lineage>
</organism>
<sequence length="334" mass="37508">MKKIRPLTEADVTAESAFFMQRRQVLKALGISAAALSLPSTAQADLFSWFKGNDRPKAPAGKPLEFSQPAAWRSDLALTPEDKVTGYNNFYEFGLDKADPAANAGSLKTEPWTLKISGEVAKPFTLDYDDLTHRFPLEERIYRMRCVEAWSMVVPWIGFPLYKLLAQAQPTSHAKYVAFETLYAPDDMPGQKDRFIGGGLKYPYVEGLRLDEAMHPLTLMTVGVYGKALPPQNGAPIRLIVPWKYGFKGIKSIVSIKLTRERPLTTWNLSAPNEYGFYANVNPHVDHPRWSQATERFIGSGGILDVQRQPTLLFNGYANEVASLYRGLNLRENF</sequence>
<reference key="1">
    <citation type="journal article" date="2011" name="J. Bacteriol.">
        <title>Comparative genomics of 28 Salmonella enterica isolates: evidence for CRISPR-mediated adaptive sublineage evolution.</title>
        <authorList>
            <person name="Fricke W.F."/>
            <person name="Mammel M.K."/>
            <person name="McDermott P.F."/>
            <person name="Tartera C."/>
            <person name="White D.G."/>
            <person name="Leclerc J.E."/>
            <person name="Ravel J."/>
            <person name="Cebula T.A."/>
        </authorList>
    </citation>
    <scope>NUCLEOTIDE SEQUENCE [LARGE SCALE GENOMIC DNA]</scope>
    <source>
        <strain>CT_02021853</strain>
    </source>
</reference>
<dbReference type="EC" id="1.8.5.-" evidence="1"/>
<dbReference type="EMBL" id="CP001144">
    <property type="protein sequence ID" value="ACH77263.1"/>
    <property type="molecule type" value="Genomic_DNA"/>
</dbReference>
<dbReference type="RefSeq" id="WP_000723872.1">
    <property type="nucleotide sequence ID" value="NC_011205.1"/>
</dbReference>
<dbReference type="SMR" id="B5FIV5"/>
<dbReference type="KEGG" id="sed:SeD_A3737"/>
<dbReference type="HOGENOM" id="CLU_045520_0_0_6"/>
<dbReference type="Proteomes" id="UP000008322">
    <property type="component" value="Chromosome"/>
</dbReference>
<dbReference type="GO" id="GO:0042597">
    <property type="term" value="C:periplasmic space"/>
    <property type="evidence" value="ECO:0007669"/>
    <property type="project" value="UniProtKB-SubCell"/>
</dbReference>
<dbReference type="GO" id="GO:0046872">
    <property type="term" value="F:metal ion binding"/>
    <property type="evidence" value="ECO:0007669"/>
    <property type="project" value="UniProtKB-KW"/>
</dbReference>
<dbReference type="GO" id="GO:0043546">
    <property type="term" value="F:molybdopterin cofactor binding"/>
    <property type="evidence" value="ECO:0007669"/>
    <property type="project" value="UniProtKB-UniRule"/>
</dbReference>
<dbReference type="GO" id="GO:0016672">
    <property type="term" value="F:oxidoreductase activity, acting on a sulfur group of donors, quinone or similar compound as acceptor"/>
    <property type="evidence" value="ECO:0007669"/>
    <property type="project" value="UniProtKB-UniRule"/>
</dbReference>
<dbReference type="GO" id="GO:0030091">
    <property type="term" value="P:protein repair"/>
    <property type="evidence" value="ECO:0007669"/>
    <property type="project" value="UniProtKB-UniRule"/>
</dbReference>
<dbReference type="CDD" id="cd02107">
    <property type="entry name" value="YedY_like_Moco"/>
    <property type="match status" value="1"/>
</dbReference>
<dbReference type="FunFam" id="3.90.420.10:FF:000001">
    <property type="entry name" value="Protein-methionine-sulfoxide reductase catalytic subunit MsrP"/>
    <property type="match status" value="1"/>
</dbReference>
<dbReference type="Gene3D" id="3.90.420.10">
    <property type="entry name" value="Oxidoreductase, molybdopterin-binding domain"/>
    <property type="match status" value="1"/>
</dbReference>
<dbReference type="HAMAP" id="MF_01206">
    <property type="entry name" value="MsrP"/>
    <property type="match status" value="1"/>
</dbReference>
<dbReference type="InterPro" id="IPR022867">
    <property type="entry name" value="MsrP"/>
</dbReference>
<dbReference type="InterPro" id="IPR000572">
    <property type="entry name" value="OxRdtase_Mopterin-bd_dom"/>
</dbReference>
<dbReference type="InterPro" id="IPR036374">
    <property type="entry name" value="OxRdtase_Mopterin-bd_sf"/>
</dbReference>
<dbReference type="InterPro" id="IPR006311">
    <property type="entry name" value="TAT_signal"/>
</dbReference>
<dbReference type="NCBIfam" id="NF003767">
    <property type="entry name" value="PRK05363.1"/>
    <property type="match status" value="1"/>
</dbReference>
<dbReference type="PANTHER" id="PTHR43032">
    <property type="entry name" value="PROTEIN-METHIONINE-SULFOXIDE REDUCTASE"/>
    <property type="match status" value="1"/>
</dbReference>
<dbReference type="PANTHER" id="PTHR43032:SF3">
    <property type="entry name" value="PROTEIN-METHIONINE-SULFOXIDE REDUCTASE CATALYTIC SUBUNIT MSRP"/>
    <property type="match status" value="1"/>
</dbReference>
<dbReference type="Pfam" id="PF00174">
    <property type="entry name" value="Oxidored_molyb"/>
    <property type="match status" value="1"/>
</dbReference>
<dbReference type="SUPFAM" id="SSF56524">
    <property type="entry name" value="Oxidoreductase molybdopterin-binding domain"/>
    <property type="match status" value="1"/>
</dbReference>
<dbReference type="PROSITE" id="PS51318">
    <property type="entry name" value="TAT"/>
    <property type="match status" value="1"/>
</dbReference>
<keyword id="KW-0479">Metal-binding</keyword>
<keyword id="KW-0500">Molybdenum</keyword>
<keyword id="KW-0560">Oxidoreductase</keyword>
<keyword id="KW-0574">Periplasm</keyword>
<keyword id="KW-0732">Signal</keyword>
<name>MSRP_SALDC</name>
<accession>B5FIV5</accession>
<evidence type="ECO:0000255" key="1">
    <source>
        <dbReference type="HAMAP-Rule" id="MF_01206"/>
    </source>
</evidence>